<protein>
    <recommendedName>
        <fullName>UPF0337 protein YjbJ</fullName>
    </recommendedName>
</protein>
<dbReference type="EMBL" id="U00006">
    <property type="protein sequence ID" value="AAC43139.1"/>
    <property type="molecule type" value="Genomic_DNA"/>
</dbReference>
<dbReference type="EMBL" id="U00096">
    <property type="protein sequence ID" value="AAC77015.1"/>
    <property type="molecule type" value="Genomic_DNA"/>
</dbReference>
<dbReference type="EMBL" id="AP009048">
    <property type="protein sequence ID" value="BAE78047.1"/>
    <property type="molecule type" value="Genomic_DNA"/>
</dbReference>
<dbReference type="PIR" id="D65212">
    <property type="entry name" value="D65212"/>
</dbReference>
<dbReference type="RefSeq" id="NP_418469.1">
    <property type="nucleotide sequence ID" value="NC_000913.3"/>
</dbReference>
<dbReference type="RefSeq" id="WP_001030593.1">
    <property type="nucleotide sequence ID" value="NZ_STEB01000022.1"/>
</dbReference>
<dbReference type="PDB" id="1RYK">
    <property type="method" value="NMR"/>
    <property type="chains" value="A=1-69"/>
</dbReference>
<dbReference type="PDBsum" id="1RYK"/>
<dbReference type="BMRB" id="P68206"/>
<dbReference type="SMR" id="P68206"/>
<dbReference type="BioGRID" id="4261626">
    <property type="interactions" value="17"/>
</dbReference>
<dbReference type="BioGRID" id="852847">
    <property type="interactions" value="1"/>
</dbReference>
<dbReference type="DIP" id="DIP-48052N"/>
<dbReference type="FunCoup" id="P68206">
    <property type="interactions" value="105"/>
</dbReference>
<dbReference type="IntAct" id="P68206">
    <property type="interactions" value="7"/>
</dbReference>
<dbReference type="STRING" id="511145.b4045"/>
<dbReference type="jPOST" id="P68206"/>
<dbReference type="PaxDb" id="511145-b4045"/>
<dbReference type="DNASU" id="948553"/>
<dbReference type="EnsemblBacteria" id="AAC77015">
    <property type="protein sequence ID" value="AAC77015"/>
    <property type="gene ID" value="b4045"/>
</dbReference>
<dbReference type="GeneID" id="948553"/>
<dbReference type="KEGG" id="ecj:JW4005"/>
<dbReference type="KEGG" id="eco:b4045"/>
<dbReference type="KEGG" id="ecoc:C3026_21860"/>
<dbReference type="PATRIC" id="fig|511145.12.peg.4162"/>
<dbReference type="EchoBASE" id="EB1872"/>
<dbReference type="eggNOG" id="COG3237">
    <property type="taxonomic scope" value="Bacteria"/>
</dbReference>
<dbReference type="HOGENOM" id="CLU_135567_4_1_6"/>
<dbReference type="InParanoid" id="P68206"/>
<dbReference type="OMA" id="WERDTRW"/>
<dbReference type="OrthoDB" id="9796058at2"/>
<dbReference type="PhylomeDB" id="P68206"/>
<dbReference type="BioCyc" id="EcoCyc:EG11928-MONOMER"/>
<dbReference type="EvolutionaryTrace" id="P68206"/>
<dbReference type="PRO" id="PR:P68206"/>
<dbReference type="Proteomes" id="UP000000625">
    <property type="component" value="Chromosome"/>
</dbReference>
<dbReference type="GO" id="GO:0060187">
    <property type="term" value="C:cell pole"/>
    <property type="evidence" value="ECO:0000314"/>
    <property type="project" value="EcoCyc"/>
</dbReference>
<dbReference type="GO" id="GO:0005829">
    <property type="term" value="C:cytosol"/>
    <property type="evidence" value="ECO:0000314"/>
    <property type="project" value="EcoCyc"/>
</dbReference>
<dbReference type="FunFam" id="1.10.1470.10:FF:000001">
    <property type="entry name" value="CsbD family protein"/>
    <property type="match status" value="1"/>
</dbReference>
<dbReference type="Gene3D" id="1.10.1470.10">
    <property type="entry name" value="YjbJ"/>
    <property type="match status" value="1"/>
</dbReference>
<dbReference type="InterPro" id="IPR008462">
    <property type="entry name" value="CsbD"/>
</dbReference>
<dbReference type="InterPro" id="IPR050423">
    <property type="entry name" value="UPF0337_stress_rsp"/>
</dbReference>
<dbReference type="InterPro" id="IPR026042">
    <property type="entry name" value="YjbJ"/>
</dbReference>
<dbReference type="InterPro" id="IPR036629">
    <property type="entry name" value="YjbJ_sf"/>
</dbReference>
<dbReference type="NCBIfam" id="NF007748">
    <property type="entry name" value="PRK10428.1"/>
    <property type="match status" value="1"/>
</dbReference>
<dbReference type="PANTHER" id="PTHR34977">
    <property type="entry name" value="UPF0337 PROTEIN YJBJ"/>
    <property type="match status" value="1"/>
</dbReference>
<dbReference type="PANTHER" id="PTHR34977:SF1">
    <property type="entry name" value="UPF0337 PROTEIN YJBJ"/>
    <property type="match status" value="1"/>
</dbReference>
<dbReference type="Pfam" id="PF05532">
    <property type="entry name" value="CsbD"/>
    <property type="match status" value="1"/>
</dbReference>
<dbReference type="PIRSF" id="PIRSF039008">
    <property type="entry name" value="YjbJ"/>
    <property type="match status" value="1"/>
</dbReference>
<dbReference type="SUPFAM" id="SSF69047">
    <property type="entry name" value="Hypothetical protein YjbJ"/>
    <property type="match status" value="1"/>
</dbReference>
<feature type="chain" id="PRO_0000209999" description="UPF0337 protein YjbJ">
    <location>
        <begin position="1"/>
        <end position="69"/>
    </location>
</feature>
<feature type="strand" evidence="2">
    <location>
        <begin position="6"/>
        <end position="8"/>
    </location>
</feature>
<feature type="helix" evidence="2">
    <location>
        <begin position="9"/>
        <end position="20"/>
    </location>
</feature>
<feature type="helix" evidence="2">
    <location>
        <begin position="26"/>
        <end position="32"/>
    </location>
</feature>
<feature type="helix" evidence="2">
    <location>
        <begin position="36"/>
        <end position="46"/>
    </location>
</feature>
<feature type="helix" evidence="2">
    <location>
        <begin position="51"/>
        <end position="65"/>
    </location>
</feature>
<gene>
    <name type="primary">yjbJ</name>
    <name type="ordered locus">b4045</name>
    <name type="ordered locus">JW4005</name>
</gene>
<comment type="similarity">
    <text evidence="1">Belongs to the UPF0337 (CsbD) family.</text>
</comment>
<evidence type="ECO:0000305" key="1"/>
<evidence type="ECO:0007829" key="2">
    <source>
        <dbReference type="PDB" id="1RYK"/>
    </source>
</evidence>
<accession>P68206</accession>
<accession>P32691</accession>
<accession>Q2M6Q9</accession>
<organism>
    <name type="scientific">Escherichia coli (strain K12)</name>
    <dbReference type="NCBI Taxonomy" id="83333"/>
    <lineage>
        <taxon>Bacteria</taxon>
        <taxon>Pseudomonadati</taxon>
        <taxon>Pseudomonadota</taxon>
        <taxon>Gammaproteobacteria</taxon>
        <taxon>Enterobacterales</taxon>
        <taxon>Enterobacteriaceae</taxon>
        <taxon>Escherichia</taxon>
    </lineage>
</organism>
<keyword id="KW-0002">3D-structure</keyword>
<keyword id="KW-0903">Direct protein sequencing</keyword>
<keyword id="KW-1185">Reference proteome</keyword>
<sequence>MNKDEAGGNWKQFKGKVKEQWGKLTDDDMTIIEGKRDQLVGKIQERYGYQKDQAEKEVVDWETRNEYRW</sequence>
<proteinExistence type="evidence at protein level"/>
<reference key="1">
    <citation type="journal article" date="1993" name="Nucleic Acids Res.">
        <title>Analysis of the Escherichia coli genome. IV. DNA sequence of the region from 89.2 to 92.8 minutes.</title>
        <authorList>
            <person name="Blattner F.R."/>
            <person name="Burland V.D."/>
            <person name="Plunkett G. III"/>
            <person name="Sofia H.J."/>
            <person name="Daniels D.L."/>
        </authorList>
    </citation>
    <scope>NUCLEOTIDE SEQUENCE [LARGE SCALE GENOMIC DNA]</scope>
    <source>
        <strain>K12 / MG1655 / ATCC 47076</strain>
    </source>
</reference>
<reference key="2">
    <citation type="journal article" date="1997" name="Science">
        <title>The complete genome sequence of Escherichia coli K-12.</title>
        <authorList>
            <person name="Blattner F.R."/>
            <person name="Plunkett G. III"/>
            <person name="Bloch C.A."/>
            <person name="Perna N.T."/>
            <person name="Burland V."/>
            <person name="Riley M."/>
            <person name="Collado-Vides J."/>
            <person name="Glasner J.D."/>
            <person name="Rode C.K."/>
            <person name="Mayhew G.F."/>
            <person name="Gregor J."/>
            <person name="Davis N.W."/>
            <person name="Kirkpatrick H.A."/>
            <person name="Goeden M.A."/>
            <person name="Rose D.J."/>
            <person name="Mau B."/>
            <person name="Shao Y."/>
        </authorList>
    </citation>
    <scope>NUCLEOTIDE SEQUENCE [LARGE SCALE GENOMIC DNA]</scope>
    <source>
        <strain>K12 / MG1655 / ATCC 47076</strain>
    </source>
</reference>
<reference key="3">
    <citation type="journal article" date="2006" name="Mol. Syst. Biol.">
        <title>Highly accurate genome sequences of Escherichia coli K-12 strains MG1655 and W3110.</title>
        <authorList>
            <person name="Hayashi K."/>
            <person name="Morooka N."/>
            <person name="Yamamoto Y."/>
            <person name="Fujita K."/>
            <person name="Isono K."/>
            <person name="Choi S."/>
            <person name="Ohtsubo E."/>
            <person name="Baba T."/>
            <person name="Wanner B.L."/>
            <person name="Mori H."/>
            <person name="Horiuchi T."/>
        </authorList>
    </citation>
    <scope>NUCLEOTIDE SEQUENCE [LARGE SCALE GENOMIC DNA]</scope>
    <source>
        <strain>K12 / W3110 / ATCC 27325 / DSM 5911</strain>
    </source>
</reference>
<reference key="4">
    <citation type="journal article" date="1997" name="Electrophoresis">
        <title>Comparing the predicted and observed properties of proteins encoded in the genome of Escherichia coli K-12.</title>
        <authorList>
            <person name="Link A.J."/>
            <person name="Robison K."/>
            <person name="Church G.M."/>
        </authorList>
    </citation>
    <scope>PROTEIN SEQUENCE OF 1-12</scope>
    <source>
        <strain>K12 / EMG2</strain>
    </source>
</reference>
<reference key="5">
    <citation type="journal article" date="1998" name="FEMS Microbiol. Lett.">
        <title>Small genes/gene-products in Escherichia coli K-12.</title>
        <authorList>
            <person name="Wasinger V.C."/>
            <person name="Humphery-Smith I."/>
        </authorList>
    </citation>
    <scope>PROTEIN SEQUENCE OF 1-10</scope>
    <source>
        <strain>K12</strain>
    </source>
</reference>
<reference key="6">
    <citation type="journal article" date="2002" name="Proteins">
        <title>NMR structure of the hypothetical protein encoded by the YjbJ gene from Escherichia coli.</title>
        <authorList>
            <person name="Pineda-Lucena A."/>
            <person name="Liao J."/>
            <person name="Wu B."/>
            <person name="Yee A."/>
            <person name="Cort J.R."/>
            <person name="Kennedy M.A."/>
            <person name="Edwards A.M."/>
            <person name="Arrowsmith C.H."/>
        </authorList>
    </citation>
    <scope>STRUCTURE BY NMR</scope>
</reference>
<name>YJBJ_ECOLI</name>